<comment type="function">
    <text evidence="1">Catalyzes the reversible interconversion of serine and glycine with tetrahydrofolate (THF) serving as the one-carbon carrier. This reaction serves as the major source of one-carbon groups required for the biosynthesis of purines, thymidylate, methionine, and other important biomolecules. Also exhibits THF-independent aldolase activity toward beta-hydroxyamino acids, producing glycine and aldehydes, via a retro-aldol mechanism.</text>
</comment>
<comment type="catalytic activity">
    <reaction evidence="1">
        <text>(6R)-5,10-methylene-5,6,7,8-tetrahydrofolate + glycine + H2O = (6S)-5,6,7,8-tetrahydrofolate + L-serine</text>
        <dbReference type="Rhea" id="RHEA:15481"/>
        <dbReference type="ChEBI" id="CHEBI:15377"/>
        <dbReference type="ChEBI" id="CHEBI:15636"/>
        <dbReference type="ChEBI" id="CHEBI:33384"/>
        <dbReference type="ChEBI" id="CHEBI:57305"/>
        <dbReference type="ChEBI" id="CHEBI:57453"/>
        <dbReference type="EC" id="2.1.2.1"/>
    </reaction>
</comment>
<comment type="cofactor">
    <cofactor evidence="1">
        <name>pyridoxal 5'-phosphate</name>
        <dbReference type="ChEBI" id="CHEBI:597326"/>
    </cofactor>
</comment>
<comment type="pathway">
    <text evidence="1">One-carbon metabolism; tetrahydrofolate interconversion.</text>
</comment>
<comment type="pathway">
    <text evidence="1">Amino-acid biosynthesis; glycine biosynthesis; glycine from L-serine: step 1/1.</text>
</comment>
<comment type="subunit">
    <text evidence="1">Homodimer.</text>
</comment>
<comment type="subcellular location">
    <subcellularLocation>
        <location evidence="1">Cytoplasm</location>
    </subcellularLocation>
</comment>
<comment type="similarity">
    <text evidence="1">Belongs to the SHMT family.</text>
</comment>
<accession>A8H1Q0</accession>
<gene>
    <name evidence="1" type="primary">glyA</name>
    <name type="ordered locus">Spea_1160</name>
</gene>
<protein>
    <recommendedName>
        <fullName evidence="1">Serine hydroxymethyltransferase</fullName>
        <shortName evidence="1">SHMT</shortName>
        <shortName evidence="1">Serine methylase</shortName>
        <ecNumber evidence="1">2.1.2.1</ecNumber>
    </recommendedName>
</protein>
<feature type="chain" id="PRO_1000074909" description="Serine hydroxymethyltransferase">
    <location>
        <begin position="1"/>
        <end position="418"/>
    </location>
</feature>
<feature type="binding site" evidence="1">
    <location>
        <position position="121"/>
    </location>
    <ligand>
        <name>(6S)-5,6,7,8-tetrahydrofolate</name>
        <dbReference type="ChEBI" id="CHEBI:57453"/>
    </ligand>
</feature>
<feature type="binding site" evidence="1">
    <location>
        <begin position="125"/>
        <end position="127"/>
    </location>
    <ligand>
        <name>(6S)-5,6,7,8-tetrahydrofolate</name>
        <dbReference type="ChEBI" id="CHEBI:57453"/>
    </ligand>
</feature>
<feature type="binding site" evidence="1">
    <location>
        <begin position="356"/>
        <end position="358"/>
    </location>
    <ligand>
        <name>(6S)-5,6,7,8-tetrahydrofolate</name>
        <dbReference type="ChEBI" id="CHEBI:57453"/>
    </ligand>
</feature>
<feature type="site" description="Plays an important role in substrate specificity" evidence="1">
    <location>
        <position position="229"/>
    </location>
</feature>
<feature type="modified residue" description="N6-(pyridoxal phosphate)lysine" evidence="1">
    <location>
        <position position="230"/>
    </location>
</feature>
<dbReference type="EC" id="2.1.2.1" evidence="1"/>
<dbReference type="EMBL" id="CP000851">
    <property type="protein sequence ID" value="ABV86487.1"/>
    <property type="molecule type" value="Genomic_DNA"/>
</dbReference>
<dbReference type="RefSeq" id="WP_012154415.1">
    <property type="nucleotide sequence ID" value="NC_009901.1"/>
</dbReference>
<dbReference type="SMR" id="A8H1Q0"/>
<dbReference type="STRING" id="398579.Spea_1160"/>
<dbReference type="KEGG" id="spl:Spea_1160"/>
<dbReference type="eggNOG" id="COG0112">
    <property type="taxonomic scope" value="Bacteria"/>
</dbReference>
<dbReference type="HOGENOM" id="CLU_022477_2_1_6"/>
<dbReference type="OrthoDB" id="9803846at2"/>
<dbReference type="UniPathway" id="UPA00193"/>
<dbReference type="UniPathway" id="UPA00288">
    <property type="reaction ID" value="UER01023"/>
</dbReference>
<dbReference type="Proteomes" id="UP000002608">
    <property type="component" value="Chromosome"/>
</dbReference>
<dbReference type="GO" id="GO:0005829">
    <property type="term" value="C:cytosol"/>
    <property type="evidence" value="ECO:0007669"/>
    <property type="project" value="TreeGrafter"/>
</dbReference>
<dbReference type="GO" id="GO:0004372">
    <property type="term" value="F:glycine hydroxymethyltransferase activity"/>
    <property type="evidence" value="ECO:0007669"/>
    <property type="project" value="UniProtKB-UniRule"/>
</dbReference>
<dbReference type="GO" id="GO:0030170">
    <property type="term" value="F:pyridoxal phosphate binding"/>
    <property type="evidence" value="ECO:0007669"/>
    <property type="project" value="UniProtKB-UniRule"/>
</dbReference>
<dbReference type="GO" id="GO:0019264">
    <property type="term" value="P:glycine biosynthetic process from serine"/>
    <property type="evidence" value="ECO:0007669"/>
    <property type="project" value="UniProtKB-UniRule"/>
</dbReference>
<dbReference type="GO" id="GO:0035999">
    <property type="term" value="P:tetrahydrofolate interconversion"/>
    <property type="evidence" value="ECO:0007669"/>
    <property type="project" value="UniProtKB-UniRule"/>
</dbReference>
<dbReference type="CDD" id="cd00378">
    <property type="entry name" value="SHMT"/>
    <property type="match status" value="1"/>
</dbReference>
<dbReference type="FunFam" id="3.40.640.10:FF:000001">
    <property type="entry name" value="Serine hydroxymethyltransferase"/>
    <property type="match status" value="1"/>
</dbReference>
<dbReference type="FunFam" id="3.90.1150.10:FF:000003">
    <property type="entry name" value="Serine hydroxymethyltransferase"/>
    <property type="match status" value="1"/>
</dbReference>
<dbReference type="Gene3D" id="3.90.1150.10">
    <property type="entry name" value="Aspartate Aminotransferase, domain 1"/>
    <property type="match status" value="1"/>
</dbReference>
<dbReference type="Gene3D" id="3.40.640.10">
    <property type="entry name" value="Type I PLP-dependent aspartate aminotransferase-like (Major domain)"/>
    <property type="match status" value="1"/>
</dbReference>
<dbReference type="HAMAP" id="MF_00051">
    <property type="entry name" value="SHMT"/>
    <property type="match status" value="1"/>
</dbReference>
<dbReference type="InterPro" id="IPR015424">
    <property type="entry name" value="PyrdxlP-dep_Trfase"/>
</dbReference>
<dbReference type="InterPro" id="IPR015421">
    <property type="entry name" value="PyrdxlP-dep_Trfase_major"/>
</dbReference>
<dbReference type="InterPro" id="IPR015422">
    <property type="entry name" value="PyrdxlP-dep_Trfase_small"/>
</dbReference>
<dbReference type="InterPro" id="IPR001085">
    <property type="entry name" value="Ser_HO-MeTrfase"/>
</dbReference>
<dbReference type="InterPro" id="IPR049943">
    <property type="entry name" value="Ser_HO-MeTrfase-like"/>
</dbReference>
<dbReference type="InterPro" id="IPR019798">
    <property type="entry name" value="Ser_HO-MeTrfase_PLP_BS"/>
</dbReference>
<dbReference type="InterPro" id="IPR039429">
    <property type="entry name" value="SHMT-like_dom"/>
</dbReference>
<dbReference type="NCBIfam" id="NF000586">
    <property type="entry name" value="PRK00011.1"/>
    <property type="match status" value="1"/>
</dbReference>
<dbReference type="PANTHER" id="PTHR11680">
    <property type="entry name" value="SERINE HYDROXYMETHYLTRANSFERASE"/>
    <property type="match status" value="1"/>
</dbReference>
<dbReference type="PANTHER" id="PTHR11680:SF50">
    <property type="entry name" value="SERINE HYDROXYMETHYLTRANSFERASE"/>
    <property type="match status" value="1"/>
</dbReference>
<dbReference type="Pfam" id="PF00464">
    <property type="entry name" value="SHMT"/>
    <property type="match status" value="1"/>
</dbReference>
<dbReference type="PIRSF" id="PIRSF000412">
    <property type="entry name" value="SHMT"/>
    <property type="match status" value="1"/>
</dbReference>
<dbReference type="SUPFAM" id="SSF53383">
    <property type="entry name" value="PLP-dependent transferases"/>
    <property type="match status" value="1"/>
</dbReference>
<dbReference type="PROSITE" id="PS00096">
    <property type="entry name" value="SHMT"/>
    <property type="match status" value="1"/>
</dbReference>
<name>GLYA_SHEPA</name>
<organism>
    <name type="scientific">Shewanella pealeana (strain ATCC 700345 / ANG-SQ1)</name>
    <dbReference type="NCBI Taxonomy" id="398579"/>
    <lineage>
        <taxon>Bacteria</taxon>
        <taxon>Pseudomonadati</taxon>
        <taxon>Pseudomonadota</taxon>
        <taxon>Gammaproteobacteria</taxon>
        <taxon>Alteromonadales</taxon>
        <taxon>Shewanellaceae</taxon>
        <taxon>Shewanella</taxon>
    </lineage>
</organism>
<sequence length="418" mass="45292">MLKKDMNIADYDPQLFAAIEDETRRQEEHIELIASENYCSPRVIEAQGTQLTNKYAEGYPGKRYYGGCEHVDIVEELAISRAKELFGATYANVQPHSGSQANAAVFMALLQGGDTVLGMSLAHGGHLTHGSHVSFSGKLYNAVQYGIDETTGQIDYAEVERLAVEHKPKMIIAGFSAYSGIIDWGKFREIADKVGAYLFVDMAHVAGLVAAGIYPNPMPHAHVVTTTTHKTLAGPRGGLILSSINDEDIYKKLNSAVFPGGQGGPLMHVIAAKAVAFKEALDPEFTTYQEQVVVNAKAMARTFIERGYNVVSGGTDNHLFLLDLISKDITGKDADAALGNANITVNKNSVPNDPRSPFVTSGLRIGSPAITRRGFGEEESVQLTHWMCDVLDDISDLAVSERVKGQVLELCAKFPVYG</sequence>
<reference key="1">
    <citation type="submission" date="2007-10" db="EMBL/GenBank/DDBJ databases">
        <title>Complete sequence of Shewanella pealeana ATCC 700345.</title>
        <authorList>
            <consortium name="US DOE Joint Genome Institute"/>
            <person name="Copeland A."/>
            <person name="Lucas S."/>
            <person name="Lapidus A."/>
            <person name="Barry K."/>
            <person name="Glavina del Rio T."/>
            <person name="Dalin E."/>
            <person name="Tice H."/>
            <person name="Pitluck S."/>
            <person name="Chertkov O."/>
            <person name="Brettin T."/>
            <person name="Bruce D."/>
            <person name="Detter J.C."/>
            <person name="Han C."/>
            <person name="Schmutz J."/>
            <person name="Larimer F."/>
            <person name="Land M."/>
            <person name="Hauser L."/>
            <person name="Kyrpides N."/>
            <person name="Kim E."/>
            <person name="Zhao J.-S.Z."/>
            <person name="Manno D."/>
            <person name="Hawari J."/>
            <person name="Richardson P."/>
        </authorList>
    </citation>
    <scope>NUCLEOTIDE SEQUENCE [LARGE SCALE GENOMIC DNA]</scope>
    <source>
        <strain>ATCC 700345 / ANG-SQ1</strain>
    </source>
</reference>
<evidence type="ECO:0000255" key="1">
    <source>
        <dbReference type="HAMAP-Rule" id="MF_00051"/>
    </source>
</evidence>
<proteinExistence type="inferred from homology"/>
<keyword id="KW-0028">Amino-acid biosynthesis</keyword>
<keyword id="KW-0963">Cytoplasm</keyword>
<keyword id="KW-0554">One-carbon metabolism</keyword>
<keyword id="KW-0663">Pyridoxal phosphate</keyword>
<keyword id="KW-1185">Reference proteome</keyword>
<keyword id="KW-0808">Transferase</keyword>